<proteinExistence type="evidence at protein level"/>
<keyword id="KW-0002">3D-structure</keyword>
<keyword id="KW-0067">ATP-binding</keyword>
<keyword id="KW-0131">Cell cycle</keyword>
<keyword id="KW-0963">Cytoplasm</keyword>
<keyword id="KW-0418">Kinase</keyword>
<keyword id="KW-0547">Nucleotide-binding</keyword>
<keyword id="KW-0539">Nucleus</keyword>
<keyword id="KW-0597">Phosphoprotein</keyword>
<keyword id="KW-1185">Reference proteome</keyword>
<keyword id="KW-0677">Repeat</keyword>
<keyword id="KW-0723">Serine/threonine-protein kinase</keyword>
<keyword id="KW-0346">Stress response</keyword>
<keyword id="KW-0808">Transferase</keyword>
<accession>P18654</accession>
<accession>B1AXN4</accession>
<accession>Q03140</accession>
<accession>Q8K3J8</accession>
<protein>
    <recommendedName>
        <fullName>Ribosomal protein S6 kinase alpha-3</fullName>
        <shortName>S6K-alpha-3</shortName>
        <ecNumber evidence="9">2.7.11.1</ecNumber>
    </recommendedName>
    <alternativeName>
        <fullName>90 kDa ribosomal protein S6 kinase 3</fullName>
        <shortName>p90-RSK 3</shortName>
        <shortName>p90RSK3</shortName>
    </alternativeName>
    <alternativeName>
        <fullName>MAP kinase-activated protein kinase 1b</fullName>
        <shortName>MAPK-activated protein kinase 1b</shortName>
        <shortName>MAPKAP kinase 1b</shortName>
        <shortName>MAPKAPK-1b</shortName>
    </alternativeName>
    <alternativeName>
        <fullName evidence="13">Ribosomal S6 kinase 2</fullName>
        <shortName evidence="13">RSK-2</shortName>
    </alternativeName>
    <alternativeName>
        <fullName>pp90RSK2</fullName>
    </alternativeName>
</protein>
<name>KS6A3_MOUSE</name>
<comment type="function">
    <text evidence="2 7 8 9 10 11 12">Serine/threonine-protein kinase that acts downstream of ERK (MAPK1/ERK2 and MAPK3/ERK1) signaling and mediates mitogenic and stress-induced activation of the transcription factors CREB1, ETV1/ER81 and NR4A1/NUR77, regulates translation through RPS6 and EIF4B phosphorylation, and mediates cellular proliferation, survival, and differentiation by modulating mTOR signaling and repressing pro-apoptotic function of BAD and DAPK1 (PubMed:10856237, PubMed:15109498). In fibroblast, is required for EGF-stimulated phosphorylation of CREB1 and histone H3 at 'Ser-10', which results in the subsequent transcriptional activation of several immediate-early genes (By similarity). In response to mitogenic stimulation (EGF and PMA), phosphorylates and activates NR4A1/NUR77 and ETV1/ER81 transcription factors and the cofactor CREBBP (By similarity). Upon insulin-derived signal, acts indirectly on the transcription regulation of several genes by phosphorylating GSK3B at 'Ser-9' and inhibiting its activity (By similarity). Phosphorylates RPS6 in response to serum or EGF via an mTOR-independent mechanism and promotes translation initiation by facilitating assembly of the preinitiation complex (By similarity). In response to insulin, phosphorylates EIF4B, enhancing EIF4B affinity for the EIF3 complex and stimulating cap-dependent translation (By similarity). Is involved in the mTOR nutrient-sensing pathway by directly phosphorylating TSC2 at 'Ser-1798', which potently inhibits TSC2 ability to suppress mTOR signaling, and mediates phosphorylation of RPTOR, which regulates mTORC1 activity and may promote rapamycin-sensitive signaling independently of the PI3K/AKT pathway (By similarity). Mediates cell survival by phosphorylating the pro-apoptotic proteins BAD and DAPK1 and suppressing their pro-apoptotic function (By similarity). Promotes the survival of hepatic stellate cells by phosphorylating CEBPB in response to the hepatotoxin carbon tetrachloride (CCl4) (By similarity). Is involved in cell cycle regulation by phosphorylating the CDK inhibitor CDKN1B, which promotes CDKN1B association with 14-3-3 proteins and prevents its translocation to the nucleus and inhibition of G1 progression (PubMed:14504289). In LPS-stimulated dendritic cells, is involved in TLR4-induced macropinocytosis, and in myeloma cells, acts as effector of FGFR3-mediated transformation signaling, after direct phosphorylation at Tyr-529 by FGFR3 (PubMed:17785202, PubMed:17906627). Negatively regulates EGF-induced MAPK1/3 phosphorylation via phosphorylation of SOS1 (PubMed:22827337). Phosphorylates SOS1 at 'Ser-1134' and 'Ser-1161' that create YWHAB and YWHAE binding sites and which contribute to the negative regulation of MAPK1/3 phosphorylation (PubMed:22827337). Phosphorylates EPHA2 at 'Ser-897', the RPS6KA-EPHA2 signaling pathway controls cell migration (By similarity). Acts as a regulator of osteoblast differentiation by mediating phosphorylation of ATF4, thereby promoting ATF4 transactivation activity (PubMed:15109498).</text>
</comment>
<comment type="catalytic activity">
    <reaction evidence="9">
        <text>L-seryl-[protein] + ATP = O-phospho-L-seryl-[protein] + ADP + H(+)</text>
        <dbReference type="Rhea" id="RHEA:17989"/>
        <dbReference type="Rhea" id="RHEA-COMP:9863"/>
        <dbReference type="Rhea" id="RHEA-COMP:11604"/>
        <dbReference type="ChEBI" id="CHEBI:15378"/>
        <dbReference type="ChEBI" id="CHEBI:29999"/>
        <dbReference type="ChEBI" id="CHEBI:30616"/>
        <dbReference type="ChEBI" id="CHEBI:83421"/>
        <dbReference type="ChEBI" id="CHEBI:456216"/>
        <dbReference type="EC" id="2.7.11.1"/>
    </reaction>
</comment>
<comment type="catalytic activity">
    <reaction>
        <text>L-threonyl-[protein] + ATP = O-phospho-L-threonyl-[protein] + ADP + H(+)</text>
        <dbReference type="Rhea" id="RHEA:46608"/>
        <dbReference type="Rhea" id="RHEA-COMP:11060"/>
        <dbReference type="Rhea" id="RHEA-COMP:11605"/>
        <dbReference type="ChEBI" id="CHEBI:15378"/>
        <dbReference type="ChEBI" id="CHEBI:30013"/>
        <dbReference type="ChEBI" id="CHEBI:30616"/>
        <dbReference type="ChEBI" id="CHEBI:61977"/>
        <dbReference type="ChEBI" id="CHEBI:456216"/>
        <dbReference type="EC" id="2.7.11.1"/>
    </reaction>
</comment>
<comment type="cofactor">
    <cofactor evidence="1">
        <name>Mg(2+)</name>
        <dbReference type="ChEBI" id="CHEBI:18420"/>
    </cofactor>
</comment>
<comment type="activity regulation">
    <text evidence="1">Upon extracellular signal or mitogen stimulation, phosphorylated at Thr-577 in the C-terminal kinase domain (CTKD) by MAPK1/ERK2 and MAPK3/ERK1. The activated CTKD then autophosphorylates Ser-386, allowing binding of PDPK1, which in turn phosphorylates Ser-227 in the N-terminal kinase domain (NTDK) leading to the full activation of the protein and subsequent phosphorylation of the substrates by the NTKD (By similarity).</text>
</comment>
<comment type="subunit">
    <text evidence="1">Forms a complex with either MAPK1/ERK2 or MAPK3/ERK1 in quiescent cells. Transiently dissociates following mitogenic stimulation (By similarity). Interacts with NFATC4, ETV1/ER81 and FGFR1 (By similarity).</text>
</comment>
<comment type="interaction">
    <interactant intactId="EBI-397744">
        <id>P18654</id>
    </interactant>
    <interactant intactId="EBI-15888737">
        <id>P30309</id>
        <label>cdc25-1-b</label>
    </interactant>
    <organismsDiffer>true</organismsDiffer>
    <experiments>3</experiments>
</comment>
<comment type="interaction">
    <interactant intactId="EBI-397744">
        <id>P18654</id>
    </interactant>
    <interactant intactId="EBI-15573967">
        <id>P28223-1</id>
        <label>HTR2A</label>
    </interactant>
    <organismsDiffer>true</organismsDiffer>
    <experiments>2</experiments>
</comment>
<comment type="subcellular location">
    <subcellularLocation>
        <location evidence="2">Nucleus</location>
    </subcellularLocation>
    <subcellularLocation>
        <location evidence="2">Cytoplasm</location>
    </subcellularLocation>
</comment>
<comment type="tissue specificity">
    <text>Intestine, thymus, lung, heart and brain.</text>
</comment>
<comment type="PTM">
    <text evidence="6 10 11">Activated by phosphorylation at Ser-227 by PDPK1. Autophosphorylated on Ser-386, as part of the activation process. May be phosphorylated at Thr-365 and Ser-369 by MAPK1/ERK2 and MAPK3/ERK1. Can also be activated via phosphorylation at Ser-386 by MAPKAPK2.</text>
</comment>
<comment type="PTM">
    <text evidence="1">N-terminal myristoylation results in an activated kinase in the absence of added growth factors.</text>
</comment>
<comment type="disruption phenotype">
    <text evidence="9">Mice were born at expected Mendelian ratio but display decreased bone mass (PubMed:15109498). Embryos and pups show a delay in mineralization of the skull with frontal, parietal, and interparietal bones of reduced size (PubMed:15109498). Mice also display a significant reduction in long bone length at one month of age (PubMed:15109498).</text>
</comment>
<comment type="similarity">
    <text evidence="14">Belongs to the protein kinase superfamily. AGC Ser/Thr protein kinase family. S6 kinase subfamily.</text>
</comment>
<organism>
    <name type="scientific">Mus musculus</name>
    <name type="common">Mouse</name>
    <dbReference type="NCBI Taxonomy" id="10090"/>
    <lineage>
        <taxon>Eukaryota</taxon>
        <taxon>Metazoa</taxon>
        <taxon>Chordata</taxon>
        <taxon>Craniata</taxon>
        <taxon>Vertebrata</taxon>
        <taxon>Euteleostomi</taxon>
        <taxon>Mammalia</taxon>
        <taxon>Eutheria</taxon>
        <taxon>Euarchontoglires</taxon>
        <taxon>Glires</taxon>
        <taxon>Rodentia</taxon>
        <taxon>Myomorpha</taxon>
        <taxon>Muroidea</taxon>
        <taxon>Muridae</taxon>
        <taxon>Murinae</taxon>
        <taxon>Mus</taxon>
        <taxon>Mus</taxon>
    </lineage>
</organism>
<gene>
    <name type="primary">Rps6ka3</name>
    <name type="synonym">Mapkapk1b</name>
    <name type="synonym">Rps6ka-rs1</name>
    <name evidence="13" type="synonym">Rsk2</name>
</gene>
<sequence length="740" mass="83694">MPLAQLADPWQKMAVESPSDSAENGQQIMDEPMGEEEINPQTEEGSIKEIAITHHVKEGHEKADPSQFELLKVLGQGSFGKVFLVKKISGSDARQLYAMKVLKKATLKVRDRVRTKMERDILVEVNHPFIVKLHYAFQTEGKLYLILDFLRGGDLFTRLSKEVMFTEEDVKFYLAELALALDHLHSLGIIYRDLKPENILLDEEGHIKLTDFGLSKESIDHEKKAYSFCGTVEYMAPEVVNRRGHTQSADWWSFGVLMFEMLTGTLPFQGKDRKETMTMILKAKLGMPQFLSPEAQSLLRMLFKRNPANRLGAGPDGVEEIKRHSFFSTIDWNKLYRREIHPPFKPATGRPEDTFYFDPEFTAKTPKDSPGIPPSANAHQLFRGFSFVAITSDDESQAMQTVGVHSIVQQLHRNSIQFTDGYEVKEDIGVGSYSVCKRCIHKATNMEFAVKIIDKSKRDPTEEIEILLRYGQHPNIITLKDVYDDGKYVYVVTELMKGGELLDKILRQKFFSEREASAVLFTITKTVEYLHAQGVVHRDLKPSNILYVDESGNPESIRICDFGFAKQLRAENGLLMTPCYTANFVAPEVLKRQGYDAACDIWSLGVLLYTMLTGYTPFANGPDDTPEEILARIGSGKFSLSGGYWNSVSDTAKDLVSKMLHVDPHQRLTAALVLRHPWIVHWDQLPQYQLNRQDAPHLVKGAMAATYSALNRNQSPVLEPVGRSTLAQRRGIKKITSTAL</sequence>
<dbReference type="EC" id="2.7.11.1" evidence="9"/>
<dbReference type="EMBL" id="AY083469">
    <property type="protein sequence ID" value="AAM00022.1"/>
    <property type="molecule type" value="mRNA"/>
</dbReference>
<dbReference type="EMBL" id="AL808146">
    <property type="status" value="NOT_ANNOTATED_CDS"/>
    <property type="molecule type" value="Genomic_DNA"/>
</dbReference>
<dbReference type="CCDS" id="CCDS30502.1"/>
<dbReference type="PIR" id="C32571">
    <property type="entry name" value="C32571"/>
</dbReference>
<dbReference type="PIR" id="S30504">
    <property type="entry name" value="S30504"/>
</dbReference>
<dbReference type="RefSeq" id="NP_683747.1">
    <property type="nucleotide sequence ID" value="NM_148945.2"/>
</dbReference>
<dbReference type="PDB" id="2QR7">
    <property type="method" value="X-ray"/>
    <property type="resolution" value="2.00 A"/>
    <property type="chains" value="A=399-740"/>
</dbReference>
<dbReference type="PDB" id="2QR8">
    <property type="method" value="X-ray"/>
    <property type="resolution" value="2.00 A"/>
    <property type="chains" value="A=399-740"/>
</dbReference>
<dbReference type="PDB" id="3G51">
    <property type="method" value="X-ray"/>
    <property type="resolution" value="1.80 A"/>
    <property type="chains" value="A=44-367"/>
</dbReference>
<dbReference type="PDB" id="3UBD">
    <property type="method" value="X-ray"/>
    <property type="resolution" value="1.53 A"/>
    <property type="chains" value="A=45-346"/>
</dbReference>
<dbReference type="PDB" id="4EL9">
    <property type="method" value="X-ray"/>
    <property type="resolution" value="1.55 A"/>
    <property type="chains" value="A=45-346"/>
</dbReference>
<dbReference type="PDB" id="4GUE">
    <property type="method" value="X-ray"/>
    <property type="resolution" value="1.80 A"/>
    <property type="chains" value="A=45-346"/>
</dbReference>
<dbReference type="PDB" id="4M8T">
    <property type="method" value="X-ray"/>
    <property type="resolution" value="3.00 A"/>
    <property type="chains" value="A=399-740"/>
</dbReference>
<dbReference type="PDB" id="4MAO">
    <property type="method" value="X-ray"/>
    <property type="resolution" value="2.60 A"/>
    <property type="chains" value="A=399-740"/>
</dbReference>
<dbReference type="PDB" id="5O1S">
    <property type="method" value="X-ray"/>
    <property type="resolution" value="1.90 A"/>
    <property type="chains" value="A=400-740"/>
</dbReference>
<dbReference type="PDBsum" id="2QR7"/>
<dbReference type="PDBsum" id="2QR8"/>
<dbReference type="PDBsum" id="3G51"/>
<dbReference type="PDBsum" id="3UBD"/>
<dbReference type="PDBsum" id="4EL9"/>
<dbReference type="PDBsum" id="4GUE"/>
<dbReference type="PDBsum" id="4M8T"/>
<dbReference type="PDBsum" id="4MAO"/>
<dbReference type="PDBsum" id="5O1S"/>
<dbReference type="SMR" id="P18654"/>
<dbReference type="BioGRID" id="225783">
    <property type="interactions" value="17"/>
</dbReference>
<dbReference type="CORUM" id="P18654"/>
<dbReference type="DIP" id="DIP-31554N"/>
<dbReference type="ELM" id="P18654"/>
<dbReference type="FunCoup" id="P18654">
    <property type="interactions" value="3425"/>
</dbReference>
<dbReference type="IntAct" id="P18654">
    <property type="interactions" value="8"/>
</dbReference>
<dbReference type="MINT" id="P18654"/>
<dbReference type="STRING" id="10090.ENSMUSP00000033671"/>
<dbReference type="BindingDB" id="P18654"/>
<dbReference type="ChEMBL" id="CHEMBL3297641"/>
<dbReference type="GlyGen" id="P18654">
    <property type="glycosylation" value="1 site, 1 O-linked glycan (1 site)"/>
</dbReference>
<dbReference type="iPTMnet" id="P18654"/>
<dbReference type="PhosphoSitePlus" id="P18654"/>
<dbReference type="SwissPalm" id="P18654"/>
<dbReference type="jPOST" id="P18654"/>
<dbReference type="PaxDb" id="10090-ENSMUSP00000033671"/>
<dbReference type="PeptideAtlas" id="P18654"/>
<dbReference type="ProteomicsDB" id="265029"/>
<dbReference type="Pumba" id="P18654"/>
<dbReference type="Antibodypedia" id="1004">
    <property type="antibodies" value="597 antibodies from 39 providers"/>
</dbReference>
<dbReference type="DNASU" id="110651"/>
<dbReference type="Ensembl" id="ENSMUST00000033671.13">
    <property type="protein sequence ID" value="ENSMUSP00000033671.7"/>
    <property type="gene ID" value="ENSMUSG00000031309.16"/>
</dbReference>
<dbReference type="GeneID" id="110651"/>
<dbReference type="KEGG" id="mmu:110651"/>
<dbReference type="UCSC" id="uc009usj.2">
    <property type="organism name" value="mouse"/>
</dbReference>
<dbReference type="AGR" id="MGI:104557"/>
<dbReference type="CTD" id="6197"/>
<dbReference type="MGI" id="MGI:104557">
    <property type="gene designation" value="Rps6ka3"/>
</dbReference>
<dbReference type="VEuPathDB" id="HostDB:ENSMUSG00000031309"/>
<dbReference type="eggNOG" id="KOG0603">
    <property type="taxonomic scope" value="Eukaryota"/>
</dbReference>
<dbReference type="GeneTree" id="ENSGT00940000159370"/>
<dbReference type="InParanoid" id="P18654"/>
<dbReference type="OMA" id="QTDEVFY"/>
<dbReference type="OrthoDB" id="63267at2759"/>
<dbReference type="PhylomeDB" id="P18654"/>
<dbReference type="TreeFam" id="TF313438"/>
<dbReference type="Reactome" id="R-MMU-198753">
    <property type="pathway name" value="ERK/MAPK targets"/>
</dbReference>
<dbReference type="Reactome" id="R-MMU-199920">
    <property type="pathway name" value="CREB phosphorylation"/>
</dbReference>
<dbReference type="Reactome" id="R-MMU-2559582">
    <property type="pathway name" value="Senescence-Associated Secretory Phenotype (SASP)"/>
</dbReference>
<dbReference type="Reactome" id="R-MMU-442742">
    <property type="pathway name" value="CREB1 phosphorylation through NMDA receptor-mediated activation of RAS signaling"/>
</dbReference>
<dbReference type="Reactome" id="R-MMU-444257">
    <property type="pathway name" value="RSK activation"/>
</dbReference>
<dbReference type="Reactome" id="R-MMU-881907">
    <property type="pathway name" value="Gastrin-CREB signalling pathway via PKC and MAPK"/>
</dbReference>
<dbReference type="BioGRID-ORCS" id="110651">
    <property type="hits" value="5 hits in 83 CRISPR screens"/>
</dbReference>
<dbReference type="ChiTaRS" id="Rps6ka3">
    <property type="organism name" value="mouse"/>
</dbReference>
<dbReference type="EvolutionaryTrace" id="P18654"/>
<dbReference type="PRO" id="PR:P18654"/>
<dbReference type="Proteomes" id="UP000000589">
    <property type="component" value="Chromosome X"/>
</dbReference>
<dbReference type="RNAct" id="P18654">
    <property type="molecule type" value="protein"/>
</dbReference>
<dbReference type="Bgee" id="ENSMUSG00000031309">
    <property type="expression patterns" value="Expressed in trigeminal ganglion and 257 other cell types or tissues"/>
</dbReference>
<dbReference type="ExpressionAtlas" id="P18654">
    <property type="expression patterns" value="baseline and differential"/>
</dbReference>
<dbReference type="GO" id="GO:0005829">
    <property type="term" value="C:cytosol"/>
    <property type="evidence" value="ECO:0007669"/>
    <property type="project" value="Ensembl"/>
</dbReference>
<dbReference type="GO" id="GO:0005730">
    <property type="term" value="C:nucleolus"/>
    <property type="evidence" value="ECO:0007669"/>
    <property type="project" value="Ensembl"/>
</dbReference>
<dbReference type="GO" id="GO:0005654">
    <property type="term" value="C:nucleoplasm"/>
    <property type="evidence" value="ECO:0000304"/>
    <property type="project" value="Reactome"/>
</dbReference>
<dbReference type="GO" id="GO:0005524">
    <property type="term" value="F:ATP binding"/>
    <property type="evidence" value="ECO:0007669"/>
    <property type="project" value="UniProtKB-KW"/>
</dbReference>
<dbReference type="GO" id="GO:0000287">
    <property type="term" value="F:magnesium ion binding"/>
    <property type="evidence" value="ECO:0007669"/>
    <property type="project" value="InterPro"/>
</dbReference>
<dbReference type="GO" id="GO:0019901">
    <property type="term" value="F:protein kinase binding"/>
    <property type="evidence" value="ECO:0000353"/>
    <property type="project" value="UniProtKB"/>
</dbReference>
<dbReference type="GO" id="GO:0106310">
    <property type="term" value="F:protein serine kinase activity"/>
    <property type="evidence" value="ECO:0007669"/>
    <property type="project" value="RHEA"/>
</dbReference>
<dbReference type="GO" id="GO:0004674">
    <property type="term" value="F:protein serine/threonine kinase activity"/>
    <property type="evidence" value="ECO:0000314"/>
    <property type="project" value="MGI"/>
</dbReference>
<dbReference type="GO" id="GO:0035556">
    <property type="term" value="P:intracellular signal transduction"/>
    <property type="evidence" value="ECO:0007669"/>
    <property type="project" value="InterPro"/>
</dbReference>
<dbReference type="GO" id="GO:0043066">
    <property type="term" value="P:negative regulation of apoptotic process"/>
    <property type="evidence" value="ECO:0007669"/>
    <property type="project" value="Ensembl"/>
</dbReference>
<dbReference type="GO" id="GO:0045944">
    <property type="term" value="P:positive regulation of transcription by RNA polymerase II"/>
    <property type="evidence" value="ECO:0007669"/>
    <property type="project" value="Ensembl"/>
</dbReference>
<dbReference type="GO" id="GO:0032496">
    <property type="term" value="P:response to lipopolysaccharide"/>
    <property type="evidence" value="ECO:0000315"/>
    <property type="project" value="UniProtKB"/>
</dbReference>
<dbReference type="GO" id="GO:0002224">
    <property type="term" value="P:toll-like receptor signaling pathway"/>
    <property type="evidence" value="ECO:0000315"/>
    <property type="project" value="UniProtKB"/>
</dbReference>
<dbReference type="CDD" id="cd14176">
    <property type="entry name" value="STKc_RSK2_C"/>
    <property type="match status" value="1"/>
</dbReference>
<dbReference type="CDD" id="cd05582">
    <property type="entry name" value="STKc_RSK_N"/>
    <property type="match status" value="1"/>
</dbReference>
<dbReference type="FunFam" id="1.10.510.10:FF:000010">
    <property type="entry name" value="Ribosomal protein S6 kinase"/>
    <property type="match status" value="1"/>
</dbReference>
<dbReference type="FunFam" id="1.10.510.10:FF:000041">
    <property type="entry name" value="Ribosomal protein S6 kinase"/>
    <property type="match status" value="1"/>
</dbReference>
<dbReference type="FunFam" id="3.30.200.20:FF:000013">
    <property type="entry name" value="Ribosomal protein S6 kinase"/>
    <property type="match status" value="1"/>
</dbReference>
<dbReference type="FunFam" id="3.30.200.20:FF:000121">
    <property type="entry name" value="Ribosomal protein S6 kinase"/>
    <property type="match status" value="1"/>
</dbReference>
<dbReference type="Gene3D" id="3.30.200.20">
    <property type="entry name" value="Phosphorylase Kinase, domain 1"/>
    <property type="match status" value="2"/>
</dbReference>
<dbReference type="Gene3D" id="1.10.510.10">
    <property type="entry name" value="Transferase(Phosphotransferase) domain 1"/>
    <property type="match status" value="2"/>
</dbReference>
<dbReference type="InterPro" id="IPR000961">
    <property type="entry name" value="AGC-kinase_C"/>
</dbReference>
<dbReference type="InterPro" id="IPR011009">
    <property type="entry name" value="Kinase-like_dom_sf"/>
</dbReference>
<dbReference type="InterPro" id="IPR017892">
    <property type="entry name" value="Pkinase_C"/>
</dbReference>
<dbReference type="InterPro" id="IPR000719">
    <property type="entry name" value="Prot_kinase_dom"/>
</dbReference>
<dbReference type="InterPro" id="IPR017441">
    <property type="entry name" value="Protein_kinase_ATP_BS"/>
</dbReference>
<dbReference type="InterPro" id="IPR016239">
    <property type="entry name" value="Ribosomal_S6_kinase_II"/>
</dbReference>
<dbReference type="InterPro" id="IPR041905">
    <property type="entry name" value="RPS6KA3_C"/>
</dbReference>
<dbReference type="InterPro" id="IPR041906">
    <property type="entry name" value="RSK_N"/>
</dbReference>
<dbReference type="InterPro" id="IPR008271">
    <property type="entry name" value="Ser/Thr_kinase_AS"/>
</dbReference>
<dbReference type="PANTHER" id="PTHR24351">
    <property type="entry name" value="RIBOSOMAL PROTEIN S6 KINASE"/>
    <property type="match status" value="1"/>
</dbReference>
<dbReference type="Pfam" id="PF00069">
    <property type="entry name" value="Pkinase"/>
    <property type="match status" value="2"/>
</dbReference>
<dbReference type="Pfam" id="PF00433">
    <property type="entry name" value="Pkinase_C"/>
    <property type="match status" value="1"/>
</dbReference>
<dbReference type="PIRSF" id="PIRSF000606">
    <property type="entry name" value="Ribsml_S6_kin_2"/>
    <property type="match status" value="1"/>
</dbReference>
<dbReference type="SMART" id="SM00133">
    <property type="entry name" value="S_TK_X"/>
    <property type="match status" value="1"/>
</dbReference>
<dbReference type="SMART" id="SM00220">
    <property type="entry name" value="S_TKc"/>
    <property type="match status" value="2"/>
</dbReference>
<dbReference type="SUPFAM" id="SSF56112">
    <property type="entry name" value="Protein kinase-like (PK-like)"/>
    <property type="match status" value="2"/>
</dbReference>
<dbReference type="PROSITE" id="PS51285">
    <property type="entry name" value="AGC_KINASE_CTER"/>
    <property type="match status" value="1"/>
</dbReference>
<dbReference type="PROSITE" id="PS00107">
    <property type="entry name" value="PROTEIN_KINASE_ATP"/>
    <property type="match status" value="2"/>
</dbReference>
<dbReference type="PROSITE" id="PS50011">
    <property type="entry name" value="PROTEIN_KINASE_DOM"/>
    <property type="match status" value="2"/>
</dbReference>
<dbReference type="PROSITE" id="PS00108">
    <property type="entry name" value="PROTEIN_KINASE_ST"/>
    <property type="match status" value="2"/>
</dbReference>
<feature type="chain" id="PRO_0000086204" description="Ribosomal protein S6 kinase alpha-3">
    <location>
        <begin position="1"/>
        <end position="740"/>
    </location>
</feature>
<feature type="domain" description="Protein kinase 1" evidence="3">
    <location>
        <begin position="68"/>
        <end position="327"/>
    </location>
</feature>
<feature type="domain" description="AGC-kinase C-terminal" evidence="4">
    <location>
        <begin position="328"/>
        <end position="397"/>
    </location>
</feature>
<feature type="domain" description="Protein kinase 2" evidence="3">
    <location>
        <begin position="422"/>
        <end position="679"/>
    </location>
</feature>
<feature type="region of interest" description="Disordered" evidence="5">
    <location>
        <begin position="1"/>
        <end position="26"/>
    </location>
</feature>
<feature type="active site" description="Proton acceptor" evidence="1">
    <location>
        <position position="193"/>
    </location>
</feature>
<feature type="active site" description="Proton acceptor" evidence="1">
    <location>
        <position position="539"/>
    </location>
</feature>
<feature type="binding site" evidence="3">
    <location>
        <begin position="74"/>
        <end position="82"/>
    </location>
    <ligand>
        <name>ATP</name>
        <dbReference type="ChEBI" id="CHEBI:30616"/>
    </ligand>
</feature>
<feature type="binding site" evidence="3">
    <location>
        <position position="100"/>
    </location>
    <ligand>
        <name>ATP</name>
        <dbReference type="ChEBI" id="CHEBI:30616"/>
    </ligand>
</feature>
<feature type="binding site" evidence="3">
    <location>
        <begin position="428"/>
        <end position="436"/>
    </location>
    <ligand>
        <name>ATP</name>
        <dbReference type="ChEBI" id="CHEBI:30616"/>
    </ligand>
</feature>
<feature type="binding site" evidence="3">
    <location>
        <position position="451"/>
    </location>
    <ligand>
        <name>ATP</name>
        <dbReference type="ChEBI" id="CHEBI:30616"/>
    </ligand>
</feature>
<feature type="modified residue" description="Phosphoserine; by PDPK1" evidence="6">
    <location>
        <position position="227"/>
    </location>
</feature>
<feature type="modified residue" description="Phosphothreonine" evidence="15">
    <location>
        <position position="365"/>
    </location>
</feature>
<feature type="modified residue" description="Phosphoserine" evidence="15">
    <location>
        <position position="369"/>
    </location>
</feature>
<feature type="modified residue" description="Phosphoserine" evidence="2">
    <location>
        <position position="375"/>
    </location>
</feature>
<feature type="modified residue" description="Phosphoserine; by autocatalysis and MAPKAPK2" evidence="6 11">
    <location>
        <position position="386"/>
    </location>
</feature>
<feature type="modified residue" description="Phosphoserine" evidence="15">
    <location>
        <position position="415"/>
    </location>
</feature>
<feature type="modified residue" description="Phosphotyrosine; by FGFR3" evidence="10">
    <location>
        <position position="529"/>
    </location>
</feature>
<feature type="modified residue" description="Phosphoserine" evidence="2">
    <location>
        <position position="556"/>
    </location>
</feature>
<feature type="modified residue" description="Phosphoserine" evidence="15">
    <location>
        <position position="715"/>
    </location>
</feature>
<feature type="mutagenesis site" description="Loss of phosphorylation and activation by PDPK1." evidence="6">
    <original>S</original>
    <variation>E</variation>
    <location>
        <position position="227"/>
    </location>
</feature>
<feature type="mutagenesis site" description="Loss of phosphorylation by PDPK1; loss of activation by PDPK1 and EGF." evidence="6 7">
    <original>S</original>
    <variation>A</variation>
    <location>
        <position position="386"/>
    </location>
</feature>
<feature type="mutagenesis site" description="Loss of interaction with PDPK1 and phosphorylation at S-227." evidence="6 7">
    <original>S</original>
    <variation>E</variation>
    <location>
        <position position="386"/>
    </location>
</feature>
<feature type="mutagenesis site" description="Attenuates activation by MAPK1/ERK1 and MAPK3/ERK2." evidence="10">
    <original>Y</original>
    <variation>F</variation>
    <location>
        <position position="529"/>
    </location>
</feature>
<feature type="strand" evidence="17">
    <location>
        <begin position="50"/>
        <end position="56"/>
    </location>
</feature>
<feature type="helix" evidence="17">
    <location>
        <begin position="65"/>
        <end position="67"/>
    </location>
</feature>
<feature type="strand" evidence="17">
    <location>
        <begin position="68"/>
        <end position="75"/>
    </location>
</feature>
<feature type="helix" evidence="17">
    <location>
        <begin position="77"/>
        <end position="79"/>
    </location>
</feature>
<feature type="strand" evidence="17">
    <location>
        <begin position="81"/>
        <end position="87"/>
    </location>
</feature>
<feature type="turn" evidence="17">
    <location>
        <begin position="91"/>
        <end position="94"/>
    </location>
</feature>
<feature type="strand" evidence="17">
    <location>
        <begin position="96"/>
        <end position="111"/>
    </location>
</feature>
<feature type="helix" evidence="16">
    <location>
        <begin position="121"/>
        <end position="124"/>
    </location>
</feature>
<feature type="strand" evidence="17">
    <location>
        <begin position="133"/>
        <end position="139"/>
    </location>
</feature>
<feature type="strand" evidence="17">
    <location>
        <begin position="142"/>
        <end position="147"/>
    </location>
</feature>
<feature type="helix" evidence="17">
    <location>
        <begin position="156"/>
        <end position="162"/>
    </location>
</feature>
<feature type="helix" evidence="17">
    <location>
        <begin position="167"/>
        <end position="186"/>
    </location>
</feature>
<feature type="helix" evidence="17">
    <location>
        <begin position="196"/>
        <end position="198"/>
    </location>
</feature>
<feature type="strand" evidence="17">
    <location>
        <begin position="199"/>
        <end position="201"/>
    </location>
</feature>
<feature type="strand" evidence="17">
    <location>
        <begin position="207"/>
        <end position="216"/>
    </location>
</feature>
<feature type="helix" evidence="17">
    <location>
        <begin position="232"/>
        <end position="234"/>
    </location>
</feature>
<feature type="helix" evidence="17">
    <location>
        <begin position="237"/>
        <end position="241"/>
    </location>
</feature>
<feature type="helix" evidence="17">
    <location>
        <begin position="248"/>
        <end position="263"/>
    </location>
</feature>
<feature type="helix" evidence="17">
    <location>
        <begin position="273"/>
        <end position="282"/>
    </location>
</feature>
<feature type="helix" evidence="17">
    <location>
        <begin position="293"/>
        <end position="302"/>
    </location>
</feature>
<feature type="helix" evidence="17">
    <location>
        <begin position="307"/>
        <end position="309"/>
    </location>
</feature>
<feature type="turn" evidence="17">
    <location>
        <begin position="315"/>
        <end position="317"/>
    </location>
</feature>
<feature type="helix" evidence="17">
    <location>
        <begin position="318"/>
        <end position="322"/>
    </location>
</feature>
<feature type="helix" evidence="17">
    <location>
        <begin position="325"/>
        <end position="327"/>
    </location>
</feature>
<feature type="helix" evidence="17">
    <location>
        <begin position="332"/>
        <end position="336"/>
    </location>
</feature>
<feature type="helix" evidence="19">
    <location>
        <begin position="418"/>
        <end position="421"/>
    </location>
</feature>
<feature type="strand" evidence="19">
    <location>
        <begin position="422"/>
        <end position="427"/>
    </location>
</feature>
<feature type="strand" evidence="19">
    <location>
        <begin position="435"/>
        <end position="441"/>
    </location>
</feature>
<feature type="turn" evidence="19">
    <location>
        <begin position="442"/>
        <end position="444"/>
    </location>
</feature>
<feature type="strand" evidence="19">
    <location>
        <begin position="447"/>
        <end position="454"/>
    </location>
</feature>
<feature type="turn" evidence="19">
    <location>
        <begin position="455"/>
        <end position="457"/>
    </location>
</feature>
<feature type="helix" evidence="19">
    <location>
        <begin position="461"/>
        <end position="470"/>
    </location>
</feature>
<feature type="strand" evidence="19">
    <location>
        <begin position="479"/>
        <end position="484"/>
    </location>
</feature>
<feature type="strand" evidence="19">
    <location>
        <begin position="486"/>
        <end position="493"/>
    </location>
</feature>
<feature type="strand" evidence="18">
    <location>
        <begin position="498"/>
        <end position="500"/>
    </location>
</feature>
<feature type="helix" evidence="19">
    <location>
        <begin position="501"/>
        <end position="506"/>
    </location>
</feature>
<feature type="helix" evidence="19">
    <location>
        <begin position="513"/>
        <end position="532"/>
    </location>
</feature>
<feature type="helix" evidence="19">
    <location>
        <begin position="542"/>
        <end position="544"/>
    </location>
</feature>
<feature type="strand" evidence="19">
    <location>
        <begin position="545"/>
        <end position="551"/>
    </location>
</feature>
<feature type="helix" evidence="19">
    <location>
        <begin position="554"/>
        <end position="556"/>
    </location>
</feature>
<feature type="strand" evidence="19">
    <location>
        <begin position="557"/>
        <end position="559"/>
    </location>
</feature>
<feature type="helix" evidence="18">
    <location>
        <begin position="562"/>
        <end position="564"/>
    </location>
</feature>
<feature type="helix" evidence="19">
    <location>
        <begin position="587"/>
        <end position="613"/>
    </location>
</feature>
<feature type="strand" evidence="19">
    <location>
        <begin position="614"/>
        <end position="616"/>
    </location>
</feature>
<feature type="strand" evidence="19">
    <location>
        <begin position="619"/>
        <end position="621"/>
    </location>
</feature>
<feature type="helix" evidence="19">
    <location>
        <begin position="626"/>
        <end position="634"/>
    </location>
</feature>
<feature type="helix" evidence="19">
    <location>
        <begin position="643"/>
        <end position="647"/>
    </location>
</feature>
<feature type="helix" evidence="19">
    <location>
        <begin position="650"/>
        <end position="659"/>
    </location>
</feature>
<feature type="turn" evidence="19">
    <location>
        <begin position="664"/>
        <end position="666"/>
    </location>
</feature>
<feature type="helix" evidence="19">
    <location>
        <begin position="670"/>
        <end position="673"/>
    </location>
</feature>
<feature type="helix" evidence="19">
    <location>
        <begin position="677"/>
        <end position="680"/>
    </location>
</feature>
<feature type="helix" evidence="19">
    <location>
        <begin position="682"/>
        <end position="684"/>
    </location>
</feature>
<feature type="helix" evidence="19">
    <location>
        <begin position="696"/>
        <end position="711"/>
    </location>
</feature>
<evidence type="ECO:0000250" key="1"/>
<evidence type="ECO:0000250" key="2">
    <source>
        <dbReference type="UniProtKB" id="P51812"/>
    </source>
</evidence>
<evidence type="ECO:0000255" key="3">
    <source>
        <dbReference type="PROSITE-ProRule" id="PRU00159"/>
    </source>
</evidence>
<evidence type="ECO:0000255" key="4">
    <source>
        <dbReference type="PROSITE-ProRule" id="PRU00618"/>
    </source>
</evidence>
<evidence type="ECO:0000256" key="5">
    <source>
        <dbReference type="SAM" id="MobiDB-lite"/>
    </source>
</evidence>
<evidence type="ECO:0000269" key="6">
    <source>
    </source>
</evidence>
<evidence type="ECO:0000269" key="7">
    <source>
    </source>
</evidence>
<evidence type="ECO:0000269" key="8">
    <source>
    </source>
</evidence>
<evidence type="ECO:0000269" key="9">
    <source>
    </source>
</evidence>
<evidence type="ECO:0000269" key="10">
    <source>
    </source>
</evidence>
<evidence type="ECO:0000269" key="11">
    <source>
    </source>
</evidence>
<evidence type="ECO:0000269" key="12">
    <source>
    </source>
</evidence>
<evidence type="ECO:0000303" key="13">
    <source>
    </source>
</evidence>
<evidence type="ECO:0000305" key="14"/>
<evidence type="ECO:0007744" key="15">
    <source>
    </source>
</evidence>
<evidence type="ECO:0007829" key="16">
    <source>
        <dbReference type="PDB" id="3G51"/>
    </source>
</evidence>
<evidence type="ECO:0007829" key="17">
    <source>
        <dbReference type="PDB" id="3UBD"/>
    </source>
</evidence>
<evidence type="ECO:0007829" key="18">
    <source>
        <dbReference type="PDB" id="4M8T"/>
    </source>
</evidence>
<evidence type="ECO:0007829" key="19">
    <source>
        <dbReference type="PDB" id="5O1S"/>
    </source>
</evidence>
<reference key="1">
    <citation type="journal article" date="2002" name="J. Biol. Chem.">
        <title>Characterization of the p90 ribosomal S6 kinase 2 carboxyl-terminal domain as a protein kinase.</title>
        <authorList>
            <person name="Chrestensen C.A."/>
            <person name="Sturgill T.W."/>
        </authorList>
    </citation>
    <scope>NUCLEOTIDE SEQUENCE [MRNA]</scope>
</reference>
<reference key="2">
    <citation type="journal article" date="2009" name="PLoS Biol.">
        <title>Lineage-specific biology revealed by a finished genome assembly of the mouse.</title>
        <authorList>
            <person name="Church D.M."/>
            <person name="Goodstadt L."/>
            <person name="Hillier L.W."/>
            <person name="Zody M.C."/>
            <person name="Goldstein S."/>
            <person name="She X."/>
            <person name="Bult C.J."/>
            <person name="Agarwala R."/>
            <person name="Cherry J.L."/>
            <person name="DiCuccio M."/>
            <person name="Hlavina W."/>
            <person name="Kapustin Y."/>
            <person name="Meric P."/>
            <person name="Maglott D."/>
            <person name="Birtle Z."/>
            <person name="Marques A.C."/>
            <person name="Graves T."/>
            <person name="Zhou S."/>
            <person name="Teague B."/>
            <person name="Potamousis K."/>
            <person name="Churas C."/>
            <person name="Place M."/>
            <person name="Herschleb J."/>
            <person name="Runnheim R."/>
            <person name="Forrest D."/>
            <person name="Amos-Landgraf J."/>
            <person name="Schwartz D.C."/>
            <person name="Cheng Z."/>
            <person name="Lindblad-Toh K."/>
            <person name="Eichler E.E."/>
            <person name="Ponting C.P."/>
        </authorList>
    </citation>
    <scope>NUCLEOTIDE SEQUENCE [LARGE SCALE GENOMIC DNA]</scope>
    <source>
        <strain>C57BL/6J</strain>
    </source>
</reference>
<reference key="3">
    <citation type="journal article" date="1989" name="Mol. Cell. Biol.">
        <title>Sequence and expression of chicken and mouse rsk: homologs of Xenopus laevis ribosomal S6 kinase.</title>
        <authorList>
            <person name="Alcorta D.A."/>
            <person name="Crews C.M."/>
            <person name="Sweet L.J."/>
            <person name="Bankston L."/>
            <person name="Jones S.W."/>
            <person name="Erikson R.L."/>
        </authorList>
    </citation>
    <scope>NUCLEOTIDE SEQUENCE [MRNA] OF 108-740</scope>
</reference>
<reference key="4">
    <citation type="journal article" date="1999" name="J. Biol. Chem.">
        <title>90-kDa ribosomal S6 kinase is phosphorylated and activated by 3-phosphoinositide-dependent protein kinase-1.</title>
        <authorList>
            <person name="Jensen C.J."/>
            <person name="Buch M.-B."/>
            <person name="Krag T.O."/>
            <person name="Hemmings B.A."/>
            <person name="Gammeltoft S."/>
            <person name="Froedin M."/>
        </authorList>
    </citation>
    <scope>ACTIVITY REGULATION</scope>
    <scope>PHOSPHORYLATION AT SER-227 AND SER-386</scope>
    <scope>MUTAGENESIS OF SER-227 AND SER-386</scope>
</reference>
<reference key="5">
    <citation type="journal article" date="2000" name="EMBO J.">
        <title>A phosphoserine-regulated docking site in the protein kinase RSK2 that recruits and activates PDK1.</title>
        <authorList>
            <person name="Froedin M."/>
            <person name="Jensen C.J."/>
            <person name="Merienne K."/>
            <person name="Gammeltoft S."/>
        </authorList>
    </citation>
    <scope>FUNCTION</scope>
    <scope>ACTIVITY REGULATION</scope>
    <scope>MUTAGENESIS OF SER-386</scope>
</reference>
<reference key="6">
    <citation type="journal article" date="2003" name="J. Biol. Chem.">
        <title>Phosphorylation of p27Kip1 at threonine 198 by p90 ribosomal protein S6 kinases promotes its binding to 14-3-3 and cytoplasmic localization.</title>
        <authorList>
            <person name="Fujita N."/>
            <person name="Sato S."/>
            <person name="Tsuruo T."/>
        </authorList>
    </citation>
    <scope>FUNCTION IN PHOSPHORYLATION OF CDKN1B</scope>
</reference>
<reference key="7">
    <citation type="journal article" date="2004" name="Cell">
        <title>ATF4 is a substrate of RSK2 and an essential regulator of osteoblast biology; implication for Coffin-Lowry Syndrome.</title>
        <authorList>
            <person name="Yang X."/>
            <person name="Matsuda K."/>
            <person name="Bialek P."/>
            <person name="Jacquot S."/>
            <person name="Masuoka H.C."/>
            <person name="Schinke T."/>
            <person name="Li L."/>
            <person name="Brancorsini S."/>
            <person name="Sassone-Corsi P."/>
            <person name="Townes T.M."/>
            <person name="Hanauer A."/>
            <person name="Karsenty G."/>
        </authorList>
    </citation>
    <scope>FUNCTION</scope>
    <scope>CATALYTIC ACTIVITY</scope>
    <scope>DISRUPTION PHENOTYPE</scope>
</reference>
<reference key="8">
    <citation type="journal article" date="2007" name="Cancer Cell">
        <title>FGFR3 activates RSK2 to mediate hematopoietic transformation through tyrosine phosphorylation of RSK2 and activation of the MEK/ERK pathway.</title>
        <authorList>
            <person name="Kang S."/>
            <person name="Dong S."/>
            <person name="Gu T.L."/>
            <person name="Guo A."/>
            <person name="Cohen M.S."/>
            <person name="Lonial S."/>
            <person name="Khoury H.J."/>
            <person name="Fabbro D."/>
            <person name="Gilliland D.G."/>
            <person name="Bergsagel P.L."/>
            <person name="Taunton J."/>
            <person name="Polakiewicz R.D."/>
            <person name="Chen J."/>
        </authorList>
    </citation>
    <scope>FUNCTION IN HEMATOPOIETIC TRANSFORMATION</scope>
    <scope>PHOSPHORYLATION AT TYR-529</scope>
    <scope>MUTAGENESIS OF TYR-529</scope>
</reference>
<reference key="9">
    <citation type="journal article" date="2007" name="Nat. Immunol.">
        <title>The MAPK-activated kinase Rsk controls an acute Toll-like receptor signaling response in dendritic cells and is activated through two distinct pathways.</title>
        <authorList>
            <person name="Zaru R."/>
            <person name="Ronkina N."/>
            <person name="Gaestel M."/>
            <person name="Arthur J.S."/>
            <person name="Watts C."/>
        </authorList>
    </citation>
    <scope>FUNCTION IN TOLL-LIKE RECEPTOR SIGNALING</scope>
    <scope>PHOSPHORYLATION AT SER-386</scope>
</reference>
<reference key="10">
    <citation type="journal article" date="2010" name="Cell">
        <title>A tissue-specific atlas of mouse protein phosphorylation and expression.</title>
        <authorList>
            <person name="Huttlin E.L."/>
            <person name="Jedrychowski M.P."/>
            <person name="Elias J.E."/>
            <person name="Goswami T."/>
            <person name="Rad R."/>
            <person name="Beausoleil S.A."/>
            <person name="Villen J."/>
            <person name="Haas W."/>
            <person name="Sowa M.E."/>
            <person name="Gygi S.P."/>
        </authorList>
    </citation>
    <scope>PHOSPHORYLATION [LARGE SCALE ANALYSIS] AT THR-365; SER-369; SER-415 AND SER-715</scope>
    <scope>IDENTIFICATION BY MASS SPECTROMETRY [LARGE SCALE ANALYSIS]</scope>
    <source>
        <tissue>Brain</tissue>
        <tissue>Brown adipose tissue</tissue>
        <tissue>Heart</tissue>
        <tissue>Kidney</tissue>
        <tissue>Lung</tissue>
        <tissue>Pancreas</tissue>
        <tissue>Spleen</tissue>
        <tissue>Testis</tissue>
    </source>
</reference>
<reference key="11">
    <citation type="journal article" date="2012" name="Biochem. J.">
        <title>RSK phosphorylates SOS1 creating 14-3-3-docking sites and negatively regulating MAPK activation.</title>
        <authorList>
            <person name="Saha M."/>
            <person name="Carriere A."/>
            <person name="Cheerathodi M."/>
            <person name="Zhang X."/>
            <person name="Lavoie G."/>
            <person name="Rush J."/>
            <person name="Roux P.P."/>
            <person name="Ballif B.A."/>
        </authorList>
    </citation>
    <scope>FUNCTION</scope>
</reference>
<reference key="12">
    <citation type="journal article" date="2008" name="Nat. Struct. Mol. Biol.">
        <title>Structural basis for activation of the autoinhibitory C-terminal kinase domain of p90 RSK2.</title>
        <authorList>
            <person name="Malakhova M."/>
            <person name="Tereshko V."/>
            <person name="Lee S.Y."/>
            <person name="Yao K."/>
            <person name="Cho Y.Y."/>
            <person name="Bode A."/>
            <person name="Dong Z."/>
        </authorList>
    </citation>
    <scope>X-RAY CRYSTALLOGRAPHY (2.00 ANGSTROMS) OF 399-740</scope>
</reference>
<reference key="13">
    <citation type="journal article" date="2009" name="PLoS ONE">
        <title>Structural diversity of the active N-terminal kinase domain of p90 ribosomal S6 kinase 2.</title>
        <authorList>
            <person name="Malakhova M."/>
            <person name="Kurinov I."/>
            <person name="Liu K."/>
            <person name="Zheng D."/>
            <person name="D'Angelo I."/>
            <person name="Shim J.H."/>
            <person name="Steinman V."/>
            <person name="Bode A.M."/>
            <person name="Dong Z."/>
        </authorList>
    </citation>
    <scope>X-RAY CRYSTALLOGRAPHY (1.80 ANGSTROMS) OF 44-367</scope>
</reference>